<reference key="1">
    <citation type="journal article" date="2008" name="J. Bacteriol.">
        <title>Comparative genome sequence analysis of multidrug-resistant Acinetobacter baumannii.</title>
        <authorList>
            <person name="Adams M.D."/>
            <person name="Goglin K."/>
            <person name="Molyneaux N."/>
            <person name="Hujer K.M."/>
            <person name="Lavender H."/>
            <person name="Jamison J.J."/>
            <person name="MacDonald I.J."/>
            <person name="Martin K.M."/>
            <person name="Russo T."/>
            <person name="Campagnari A.A."/>
            <person name="Hujer A.M."/>
            <person name="Bonomo R.A."/>
            <person name="Gill S.R."/>
        </authorList>
    </citation>
    <scope>NUCLEOTIDE SEQUENCE [LARGE SCALE GENOMIC DNA]</scope>
    <source>
        <strain>AB0057</strain>
    </source>
</reference>
<feature type="chain" id="PRO_1000193203" description="NADPH-dependent 7-cyano-7-deazaguanine reductase">
    <location>
        <begin position="1"/>
        <end position="270"/>
    </location>
</feature>
<feature type="active site" description="Thioimide intermediate" evidence="1">
    <location>
        <position position="177"/>
    </location>
</feature>
<feature type="active site" description="Proton donor" evidence="1">
    <location>
        <position position="184"/>
    </location>
</feature>
<feature type="binding site" evidence="1">
    <location>
        <begin position="79"/>
        <end position="81"/>
    </location>
    <ligand>
        <name>substrate</name>
    </ligand>
</feature>
<feature type="binding site" evidence="1">
    <location>
        <begin position="81"/>
        <end position="82"/>
    </location>
    <ligand>
        <name>NADPH</name>
        <dbReference type="ChEBI" id="CHEBI:57783"/>
    </ligand>
</feature>
<feature type="binding site" evidence="1">
    <location>
        <begin position="216"/>
        <end position="217"/>
    </location>
    <ligand>
        <name>substrate</name>
    </ligand>
</feature>
<feature type="binding site" evidence="1">
    <location>
        <begin position="245"/>
        <end position="246"/>
    </location>
    <ligand>
        <name>NADPH</name>
        <dbReference type="ChEBI" id="CHEBI:57783"/>
    </ligand>
</feature>
<proteinExistence type="inferred from homology"/>
<name>QUEF_ACIB5</name>
<sequence>MSVEQSLLGKETQYPTSYQPDVLFPIARAQSREKYAHIQGITQGKDWWHVFEISWLNAHGIPQVAIGRITLPASSPNLIESKSLKLYFNSLNFTQFDSTQSFIETVEKDLSAAAGAKVELTLFQVDDLEISKPQGICIDDLMPERLEQHPDATLLKLDESGEEIEVELYSHLLRSNCPVTGQPDWGTVFIRFKGKKPCYRSLLAYIISYRQHNGFHEQCVEQIFADIWQNLQPEKLMVYATYTRRGGLDINPCRVSDLTWMPKPIRLARQ</sequence>
<protein>
    <recommendedName>
        <fullName evidence="1">NADPH-dependent 7-cyano-7-deazaguanine reductase</fullName>
        <ecNumber evidence="1">1.7.1.13</ecNumber>
    </recommendedName>
    <alternativeName>
        <fullName evidence="1">7-cyano-7-carbaguanine reductase</fullName>
    </alternativeName>
    <alternativeName>
        <fullName evidence="1">NADPH-dependent nitrile oxidoreductase</fullName>
    </alternativeName>
    <alternativeName>
        <fullName evidence="1">PreQ(0) reductase</fullName>
    </alternativeName>
</protein>
<accession>B7I3J1</accession>
<dbReference type="EC" id="1.7.1.13" evidence="1"/>
<dbReference type="EMBL" id="CP001182">
    <property type="protein sequence ID" value="ACJ42097.1"/>
    <property type="molecule type" value="Genomic_DNA"/>
</dbReference>
<dbReference type="RefSeq" id="WP_000110172.1">
    <property type="nucleotide sequence ID" value="NC_011586.2"/>
</dbReference>
<dbReference type="SMR" id="B7I3J1"/>
<dbReference type="KEGG" id="abn:AB57_2746"/>
<dbReference type="HOGENOM" id="CLU_054738_0_0_6"/>
<dbReference type="UniPathway" id="UPA00392"/>
<dbReference type="Proteomes" id="UP000007094">
    <property type="component" value="Chromosome"/>
</dbReference>
<dbReference type="GO" id="GO:0005737">
    <property type="term" value="C:cytoplasm"/>
    <property type="evidence" value="ECO:0007669"/>
    <property type="project" value="UniProtKB-SubCell"/>
</dbReference>
<dbReference type="GO" id="GO:0033739">
    <property type="term" value="F:preQ1 synthase activity"/>
    <property type="evidence" value="ECO:0007669"/>
    <property type="project" value="UniProtKB-UniRule"/>
</dbReference>
<dbReference type="GO" id="GO:0008616">
    <property type="term" value="P:queuosine biosynthetic process"/>
    <property type="evidence" value="ECO:0007669"/>
    <property type="project" value="UniProtKB-UniRule"/>
</dbReference>
<dbReference type="GO" id="GO:0006400">
    <property type="term" value="P:tRNA modification"/>
    <property type="evidence" value="ECO:0007669"/>
    <property type="project" value="UniProtKB-UniRule"/>
</dbReference>
<dbReference type="Gene3D" id="3.30.1130.10">
    <property type="match status" value="2"/>
</dbReference>
<dbReference type="HAMAP" id="MF_00817">
    <property type="entry name" value="QueF_type2"/>
    <property type="match status" value="1"/>
</dbReference>
<dbReference type="InterPro" id="IPR043133">
    <property type="entry name" value="GTP-CH-I_C/QueF"/>
</dbReference>
<dbReference type="InterPro" id="IPR050084">
    <property type="entry name" value="NADPH_dep_7-cyano-7-deazaG_red"/>
</dbReference>
<dbReference type="InterPro" id="IPR029500">
    <property type="entry name" value="QueF"/>
</dbReference>
<dbReference type="InterPro" id="IPR029139">
    <property type="entry name" value="QueF_N"/>
</dbReference>
<dbReference type="InterPro" id="IPR016428">
    <property type="entry name" value="QueF_type2"/>
</dbReference>
<dbReference type="NCBIfam" id="TIGR03138">
    <property type="entry name" value="QueF"/>
    <property type="match status" value="1"/>
</dbReference>
<dbReference type="PANTHER" id="PTHR34354">
    <property type="entry name" value="NADPH-DEPENDENT 7-CYANO-7-DEAZAGUANINE REDUCTASE"/>
    <property type="match status" value="1"/>
</dbReference>
<dbReference type="PANTHER" id="PTHR34354:SF1">
    <property type="entry name" value="NADPH-DEPENDENT 7-CYANO-7-DEAZAGUANINE REDUCTASE"/>
    <property type="match status" value="1"/>
</dbReference>
<dbReference type="Pfam" id="PF14489">
    <property type="entry name" value="QueF"/>
    <property type="match status" value="1"/>
</dbReference>
<dbReference type="Pfam" id="PF14819">
    <property type="entry name" value="QueF_N"/>
    <property type="match status" value="1"/>
</dbReference>
<dbReference type="PIRSF" id="PIRSF004750">
    <property type="entry name" value="Nitrile_oxidored_YqcD_prd"/>
    <property type="match status" value="1"/>
</dbReference>
<dbReference type="SUPFAM" id="SSF55620">
    <property type="entry name" value="Tetrahydrobiopterin biosynthesis enzymes-like"/>
    <property type="match status" value="1"/>
</dbReference>
<keyword id="KW-0963">Cytoplasm</keyword>
<keyword id="KW-0521">NADP</keyword>
<keyword id="KW-0560">Oxidoreductase</keyword>
<keyword id="KW-0671">Queuosine biosynthesis</keyword>
<evidence type="ECO:0000255" key="1">
    <source>
        <dbReference type="HAMAP-Rule" id="MF_00817"/>
    </source>
</evidence>
<gene>
    <name evidence="1" type="primary">queF</name>
    <name type="ordered locus">AB57_2746</name>
</gene>
<organism>
    <name type="scientific">Acinetobacter baumannii (strain AB0057)</name>
    <dbReference type="NCBI Taxonomy" id="480119"/>
    <lineage>
        <taxon>Bacteria</taxon>
        <taxon>Pseudomonadati</taxon>
        <taxon>Pseudomonadota</taxon>
        <taxon>Gammaproteobacteria</taxon>
        <taxon>Moraxellales</taxon>
        <taxon>Moraxellaceae</taxon>
        <taxon>Acinetobacter</taxon>
        <taxon>Acinetobacter calcoaceticus/baumannii complex</taxon>
    </lineage>
</organism>
<comment type="function">
    <text evidence="1">Catalyzes the NADPH-dependent reduction of 7-cyano-7-deazaguanine (preQ0) to 7-aminomethyl-7-deazaguanine (preQ1).</text>
</comment>
<comment type="catalytic activity">
    <reaction evidence="1">
        <text>7-aminomethyl-7-carbaguanine + 2 NADP(+) = 7-cyano-7-deazaguanine + 2 NADPH + 3 H(+)</text>
        <dbReference type="Rhea" id="RHEA:13409"/>
        <dbReference type="ChEBI" id="CHEBI:15378"/>
        <dbReference type="ChEBI" id="CHEBI:45075"/>
        <dbReference type="ChEBI" id="CHEBI:57783"/>
        <dbReference type="ChEBI" id="CHEBI:58349"/>
        <dbReference type="ChEBI" id="CHEBI:58703"/>
        <dbReference type="EC" id="1.7.1.13"/>
    </reaction>
</comment>
<comment type="pathway">
    <text evidence="1">tRNA modification; tRNA-queuosine biosynthesis.</text>
</comment>
<comment type="subunit">
    <text evidence="1">Homodimer.</text>
</comment>
<comment type="subcellular location">
    <subcellularLocation>
        <location evidence="1">Cytoplasm</location>
    </subcellularLocation>
</comment>
<comment type="similarity">
    <text evidence="1">Belongs to the GTP cyclohydrolase I family. QueF type 2 subfamily.</text>
</comment>